<reference key="1">
    <citation type="journal article" date="1994" name="Proc. Natl. Acad. Sci. U.S.A.">
        <title>The expression of serine carboxypeptidases during maturation and germination of the barley grain.</title>
        <authorList>
            <person name="Dal Degan F."/>
            <person name="Rocher A."/>
            <person name="Cameron-Mills V."/>
            <person name="von Wettstein D."/>
        </authorList>
    </citation>
    <scope>NUCLEOTIDE SEQUENCE [MRNA]</scope>
    <source>
        <strain>cv. Alexis</strain>
        <tissue>Grain</tissue>
    </source>
</reference>
<comment type="catalytic activity">
    <reaction>
        <text>Preferential release of a C-terminal arginine or lysine residue.</text>
        <dbReference type="EC" id="3.4.16.6"/>
    </reaction>
</comment>
<comment type="subunit">
    <text evidence="1">Carboxypeptidase II is a dimer, where each monomer is composed of two chains linked by a disulfide bond.</text>
</comment>
<comment type="developmental stage">
    <text>Expressed in the germinating embryo. Also found in the roots and shoots of the growing seedling.</text>
</comment>
<comment type="PTM">
    <text evidence="1">The linker peptide is endoproteolytically excised during enzyme maturation.</text>
</comment>
<comment type="similarity">
    <text evidence="3">Belongs to the peptidase S10 family.</text>
</comment>
<feature type="signal peptide" evidence="2">
    <location>
        <begin position="1"/>
        <end position="20"/>
    </location>
</feature>
<feature type="propeptide" id="PRO_0000004320" evidence="2">
    <location>
        <begin position="21"/>
        <end position="77"/>
    </location>
</feature>
<feature type="chain" id="PRO_0000004321" description="Serine carboxypeptidase II-3 chain A">
    <location>
        <begin position="78"/>
        <end position="341"/>
    </location>
</feature>
<feature type="propeptide" id="PRO_0000004322" description="Linker peptide" evidence="1">
    <location>
        <begin position="342"/>
        <end position="352"/>
    </location>
</feature>
<feature type="chain" id="PRO_0000004323" description="Serine carboxypeptidase II-3 chain B">
    <location>
        <begin position="353"/>
        <end position="516"/>
    </location>
</feature>
<feature type="active site" evidence="1">
    <location>
        <position position="236"/>
    </location>
</feature>
<feature type="active site" evidence="1">
    <location>
        <position position="427"/>
    </location>
</feature>
<feature type="active site" evidence="1">
    <location>
        <position position="484"/>
    </location>
</feature>
<feature type="glycosylation site" description="N-linked (GlcNAc...) asparagine" evidence="2">
    <location>
        <position position="194"/>
    </location>
</feature>
<feature type="glycosylation site" description="N-linked (GlcNAc...) asparagine" evidence="2">
    <location>
        <position position="205"/>
    </location>
</feature>
<feature type="glycosylation site" description="N-linked (GlcNAc...) asparagine" evidence="2">
    <location>
        <position position="301"/>
    </location>
</feature>
<feature type="glycosylation site" description="N-linked (GlcNAc...) asparagine" evidence="2">
    <location>
        <position position="380"/>
    </location>
</feature>
<feature type="disulfide bond" description="Interchain (between A and B chains)" evidence="1">
    <location>
        <begin position="143"/>
        <end position="391"/>
    </location>
</feature>
<feature type="disulfide bond" evidence="1">
    <location>
        <begin position="300"/>
        <end position="315"/>
    </location>
</feature>
<feature type="disulfide bond" description="Interchain (between A and B chains)" evidence="1">
    <location>
        <begin position="339"/>
        <end position="359"/>
    </location>
</feature>
<dbReference type="EC" id="3.4.16.6"/>
<dbReference type="EMBL" id="X78877">
    <property type="protein sequence ID" value="CAA55478.1"/>
    <property type="molecule type" value="mRNA"/>
</dbReference>
<dbReference type="PIR" id="S44191">
    <property type="entry name" value="S44191"/>
</dbReference>
<dbReference type="SMR" id="P52711"/>
<dbReference type="ESTHER" id="horvu-cp23">
    <property type="family name" value="Carboxypeptidase_S10"/>
</dbReference>
<dbReference type="MEROPS" id="S10.A41"/>
<dbReference type="GlyCosmos" id="P52711">
    <property type="glycosylation" value="4 sites, No reported glycans"/>
</dbReference>
<dbReference type="ExpressionAtlas" id="P52711">
    <property type="expression patterns" value="baseline and differential"/>
</dbReference>
<dbReference type="GO" id="GO:0005773">
    <property type="term" value="C:vacuole"/>
    <property type="evidence" value="ECO:0007669"/>
    <property type="project" value="TreeGrafter"/>
</dbReference>
<dbReference type="GO" id="GO:0004185">
    <property type="term" value="F:serine-type carboxypeptidase activity"/>
    <property type="evidence" value="ECO:0007669"/>
    <property type="project" value="UniProtKB-EC"/>
</dbReference>
<dbReference type="GO" id="GO:0006508">
    <property type="term" value="P:proteolysis"/>
    <property type="evidence" value="ECO:0007669"/>
    <property type="project" value="UniProtKB-KW"/>
</dbReference>
<dbReference type="FunFam" id="3.40.50.11320:FF:000001">
    <property type="entry name" value="Carboxypeptidase"/>
    <property type="match status" value="1"/>
</dbReference>
<dbReference type="FunFam" id="3.40.50.12670:FF:000002">
    <property type="entry name" value="Carboxypeptidase"/>
    <property type="match status" value="1"/>
</dbReference>
<dbReference type="FunFam" id="3.40.50.1820:FF:000573">
    <property type="entry name" value="Carboxypeptidase"/>
    <property type="match status" value="1"/>
</dbReference>
<dbReference type="Gene3D" id="3.40.50.11320">
    <property type="match status" value="1"/>
</dbReference>
<dbReference type="Gene3D" id="6.10.250.940">
    <property type="match status" value="1"/>
</dbReference>
<dbReference type="Gene3D" id="3.40.50.1820">
    <property type="entry name" value="alpha/beta hydrolase"/>
    <property type="match status" value="1"/>
</dbReference>
<dbReference type="InterPro" id="IPR029058">
    <property type="entry name" value="AB_hydrolase_fold"/>
</dbReference>
<dbReference type="InterPro" id="IPR001563">
    <property type="entry name" value="Peptidase_S10"/>
</dbReference>
<dbReference type="InterPro" id="IPR033124">
    <property type="entry name" value="Ser_caboxypep_his_AS"/>
</dbReference>
<dbReference type="InterPro" id="IPR018202">
    <property type="entry name" value="Ser_caboxypep_ser_AS"/>
</dbReference>
<dbReference type="PANTHER" id="PTHR11802:SF132">
    <property type="entry name" value="SERINE CARBOXYPEPTIDASE-LIKE 36-RELATED"/>
    <property type="match status" value="1"/>
</dbReference>
<dbReference type="PANTHER" id="PTHR11802">
    <property type="entry name" value="SERINE PROTEASE FAMILY S10 SERINE CARBOXYPEPTIDASE"/>
    <property type="match status" value="1"/>
</dbReference>
<dbReference type="Pfam" id="PF00450">
    <property type="entry name" value="Peptidase_S10"/>
    <property type="match status" value="1"/>
</dbReference>
<dbReference type="PRINTS" id="PR00724">
    <property type="entry name" value="CRBOXYPTASEC"/>
</dbReference>
<dbReference type="SUPFAM" id="SSF53474">
    <property type="entry name" value="alpha/beta-Hydrolases"/>
    <property type="match status" value="1"/>
</dbReference>
<dbReference type="PROSITE" id="PS00560">
    <property type="entry name" value="CARBOXYPEPT_SER_HIS"/>
    <property type="match status" value="1"/>
</dbReference>
<dbReference type="PROSITE" id="PS00131">
    <property type="entry name" value="CARBOXYPEPT_SER_SER"/>
    <property type="match status" value="1"/>
</dbReference>
<accession>P52711</accession>
<evidence type="ECO:0000250" key="1"/>
<evidence type="ECO:0000255" key="2"/>
<evidence type="ECO:0000305" key="3"/>
<organism>
    <name type="scientific">Hordeum vulgare</name>
    <name type="common">Barley</name>
    <dbReference type="NCBI Taxonomy" id="4513"/>
    <lineage>
        <taxon>Eukaryota</taxon>
        <taxon>Viridiplantae</taxon>
        <taxon>Streptophyta</taxon>
        <taxon>Embryophyta</taxon>
        <taxon>Tracheophyta</taxon>
        <taxon>Spermatophyta</taxon>
        <taxon>Magnoliopsida</taxon>
        <taxon>Liliopsida</taxon>
        <taxon>Poales</taxon>
        <taxon>Poaceae</taxon>
        <taxon>BOP clade</taxon>
        <taxon>Pooideae</taxon>
        <taxon>Triticodae</taxon>
        <taxon>Triticeae</taxon>
        <taxon>Hordeinae</taxon>
        <taxon>Hordeum</taxon>
    </lineage>
</organism>
<protein>
    <recommendedName>
        <fullName>Serine carboxypeptidase II-3</fullName>
        <ecNumber>3.4.16.6</ecNumber>
    </recommendedName>
    <alternativeName>
        <fullName>CP-MII.3</fullName>
    </alternativeName>
    <component>
        <recommendedName>
            <fullName>Serine carboxypeptidase II-3 chain A</fullName>
        </recommendedName>
    </component>
    <component>
        <recommendedName>
            <fullName>Serine carboxypeptidase II-3 chain B</fullName>
        </recommendedName>
    </component>
</protein>
<keyword id="KW-0121">Carboxypeptidase</keyword>
<keyword id="KW-1015">Disulfide bond</keyword>
<keyword id="KW-0325">Glycoprotein</keyword>
<keyword id="KW-0378">Hydrolase</keyword>
<keyword id="KW-0645">Protease</keyword>
<keyword id="KW-0732">Signal</keyword>
<keyword id="KW-0865">Zymogen</keyword>
<name>CBP23_HORVU</name>
<sequence>MKCTVVALVLLVAVQCLVLGAGPAAAAKARRTRQGDYLNRLRGSPSSRASWESLAAVEEQTTTKAAGRPAPVAAAVEAGRKEADRVEALPGHPRGVDFAQYAGYVTVDAAAGRALFYYLAEAVGGNGDKTKPLLLWLNGGPGCSSLGYGAMEELGPFRVMSDGKTLYSNPYSWNHAANVLFLESPAGVGYSYSNTTADYGRSGDNGTAEDAYQFLDNWLERFPEYKGREFYITGESYAGHYVPQLAHAILRHASPDINLKGIMIGNAVINDWTDSKGMYDFFWTHALISDETADGISKNCNFTAYGAGVASNALCDAASDEVGESLADIDIYNIYAPNCQSEKLVTPPIAPSIDNFDPCTDYYVEAYLNRPDVQKALHANVTRLDHPWSACSDVLTRWVDSAKTVLPIIQELMKNSIRVWVYSGDTDGRVPVTSSRLSVNQLQLPVAAKWRPWFSSTKGAGEVGGYIVQYKGDLSLVTVRGAGHEVPSYQPRRALVLVQNFLAGKALPDCKECEQD</sequence>
<gene>
    <name type="primary">CXP;2-3</name>
</gene>
<proteinExistence type="evidence at transcript level"/>